<gene>
    <name type="primary">hopAB1</name>
    <name type="synonym">virPphAPsv</name>
</gene>
<reference key="1">
    <citation type="journal article" date="2002" name="Mol. Plant Pathol.">
        <title>Location and activity of members of a family of virPphA homologues in pathovars of Pseudomonas syringae and P.savastanoi.</title>
        <authorList>
            <person name="Jackson R.W."/>
            <person name="Mansfield J.W."/>
            <person name="Ammouneh H."/>
            <person name="Dutton L.C."/>
            <person name="Wharton B."/>
            <person name="Ortiz-Barredo A."/>
            <person name="Arnold D.L."/>
            <person name="Tsiamis G."/>
            <person name="Sesma A."/>
            <person name="Butcher D."/>
            <person name="Boch J."/>
            <person name="Kim Y.J."/>
            <person name="Martin G.B."/>
            <person name="Tegli S."/>
            <person name="Murillo J."/>
            <person name="Vivian A."/>
        </authorList>
        <dbReference type="AGRICOLA" id="IND23295115"/>
    </citation>
    <scope>NUCLEOTIDE SEQUENCE [GENOMIC DNA]</scope>
    <scope>FUNCTION</scope>
    <source>
        <strain>ITM317</strain>
    </source>
</reference>
<dbReference type="EMBL" id="AJ439729">
    <property type="protein sequence ID" value="CAD29302.1"/>
    <property type="molecule type" value="Genomic_DNA"/>
</dbReference>
<dbReference type="BMRB" id="Q8RK09"/>
<dbReference type="SMR" id="Q8RK09"/>
<dbReference type="GO" id="GO:0005576">
    <property type="term" value="C:extracellular region"/>
    <property type="evidence" value="ECO:0007669"/>
    <property type="project" value="UniProtKB-SubCell"/>
</dbReference>
<dbReference type="GO" id="GO:0052040">
    <property type="term" value="P:symbiont-mediated perturbation of host programmed cell death"/>
    <property type="evidence" value="ECO:0007669"/>
    <property type="project" value="UniProtKB-KW"/>
</dbReference>
<dbReference type="CDD" id="cd12803">
    <property type="entry name" value="HopAB_BID"/>
    <property type="match status" value="1"/>
</dbReference>
<dbReference type="CDD" id="cd12802">
    <property type="entry name" value="HopAB_PID"/>
    <property type="match status" value="1"/>
</dbReference>
<dbReference type="Gene3D" id="1.20.1280.110">
    <property type="match status" value="1"/>
</dbReference>
<dbReference type="Gene3D" id="3.30.40.110">
    <property type="entry name" value="AvrPtoB, C-terminal domain"/>
    <property type="match status" value="1"/>
</dbReference>
<dbReference type="Gene3D" id="1.20.1280.220">
    <property type="entry name" value="Effector protein HopAB, BAK1-interacting domain"/>
    <property type="match status" value="1"/>
</dbReference>
<dbReference type="InterPro" id="IPR015133">
    <property type="entry name" value="E3_ubiquit_lig_AvrPtoB"/>
</dbReference>
<dbReference type="InterPro" id="IPR031759">
    <property type="entry name" value="HopAB_BAK-bd"/>
</dbReference>
<dbReference type="InterPro" id="IPR038342">
    <property type="entry name" value="HopAB_BAK-bd_sf"/>
</dbReference>
<dbReference type="InterPro" id="IPR038448">
    <property type="entry name" value="HopAB_E3_ubiquit_lig_sf"/>
</dbReference>
<dbReference type="InterPro" id="IPR033743">
    <property type="entry name" value="HopAB_PID"/>
</dbReference>
<dbReference type="Pfam" id="PF09046">
    <property type="entry name" value="AvrPtoB-E3_ubiq"/>
    <property type="match status" value="1"/>
</dbReference>
<dbReference type="Pfam" id="PF16847">
    <property type="entry name" value="AvrPtoB_bdg"/>
    <property type="match status" value="1"/>
</dbReference>
<accession>Q8RK09</accession>
<organism>
    <name type="scientific">Pseudomonas savastanoi</name>
    <name type="common">Pseudomonas syringae pv. savastanoi</name>
    <dbReference type="NCBI Taxonomy" id="29438"/>
    <lineage>
        <taxon>Bacteria</taxon>
        <taxon>Pseudomonadati</taxon>
        <taxon>Pseudomonadota</taxon>
        <taxon>Gammaproteobacteria</taxon>
        <taxon>Pseudomonadales</taxon>
        <taxon>Pseudomonadaceae</taxon>
        <taxon>Pseudomonas</taxon>
    </lineage>
</organism>
<keyword id="KW-0928">Hypersensitive response elicitation</keyword>
<keyword id="KW-0964">Secreted</keyword>
<keyword id="KW-0843">Virulence</keyword>
<comment type="function">
    <text evidence="3">Effector protein that plays different roles depending on the species and plant cultivars that interact with the pathogen. Acts as a virulence determinant by enhancing the development of disease symptoms and bacterial growth. Acts as an avirulence factor by eliciting hypersensitive response (HR) and plant resistance.</text>
</comment>
<comment type="subcellular location">
    <subcellularLocation>
        <location>Secreted</location>
    </subcellularLocation>
    <text evidence="1">Secreted via type III secretion system (T3SS).</text>
</comment>
<comment type="induction">
    <text evidence="4">Transcriptionally induced by HrpL.</text>
</comment>
<comment type="similarity">
    <text evidence="4">Belongs to the HopAB family.</text>
</comment>
<sequence length="541" mass="59744">MPGINGAGPSNFFWQWRTDGEPVTEREHDSSRSASSANSPELPPPASPAESGRQRLLRSSALSRQTREWLEATPARVQGANPPAEARQSPEAQQAERIVQELVRGGADLNNVRTMLRNVMDNNAVAFSRVERDILLQHFPNMPMTGISSDSVLANELRQRLRQTVRQQRALVQSSTPARLADSSSGSSQRSLIGRSTMLMTPGRSSSSSAAASRTSVDRHPQGLDLESARLASAARHNHSANQTNEALRRLTQEGVDMERLRTSLGRYIMSLEPLPPDLRRALESVGINPFIPEELSLVDHPVLNFSAALNRMLASRQTTTNSPELPPLASSAESGRRRLLRSPPLLSGQREWIEQNMRQGAEPQSSRLNRAVRLAVMPPQKENEDNVAYAIRLRRLNPGADVSRVVASFITDPAARQQVVDDIRAALDIAPQFSQLRTISKADAESEELGFRDAADHPDNATSCLFGEELSLSNPDQQVIGLAVNPTDKPQPYSQEVNKALTFMDMKKLAQYLADKPEHPLNRQRLDAKNISKYAFKIVP</sequence>
<evidence type="ECO:0000250" key="1"/>
<evidence type="ECO:0000256" key="2">
    <source>
        <dbReference type="SAM" id="MobiDB-lite"/>
    </source>
</evidence>
<evidence type="ECO:0000269" key="3">
    <source ref="1"/>
</evidence>
<evidence type="ECO:0000305" key="4"/>
<name>HPAB1_PSESS</name>
<protein>
    <recommendedName>
        <fullName>Effector protein hopAB1</fullName>
    </recommendedName>
    <alternativeName>
        <fullName>Protein virPphAPsv</fullName>
    </alternativeName>
</protein>
<proteinExistence type="inferred from homology"/>
<feature type="chain" id="PRO_0000236792" description="Effector protein hopAB1">
    <location>
        <begin position="1"/>
        <end position="541"/>
    </location>
</feature>
<feature type="region of interest" description="Disordered" evidence="2">
    <location>
        <begin position="1"/>
        <end position="94"/>
    </location>
</feature>
<feature type="region of interest" description="Disordered" evidence="2">
    <location>
        <begin position="168"/>
        <end position="222"/>
    </location>
</feature>
<feature type="region of interest" description="Disordered" evidence="2">
    <location>
        <begin position="317"/>
        <end position="338"/>
    </location>
</feature>
<feature type="compositionally biased region" description="Basic and acidic residues" evidence="2">
    <location>
        <begin position="18"/>
        <end position="31"/>
    </location>
</feature>
<feature type="compositionally biased region" description="Low complexity" evidence="2">
    <location>
        <begin position="183"/>
        <end position="196"/>
    </location>
</feature>